<feature type="chain" id="PRO_0000120230" description="Ribosome biogenesis protein BRX1 homolog">
    <location>
        <begin position="1"/>
        <end position="353"/>
    </location>
</feature>
<feature type="domain" description="Brix" evidence="1">
    <location>
        <begin position="60"/>
        <end position="249"/>
    </location>
</feature>
<feature type="region of interest" description="Disordered" evidence="2">
    <location>
        <begin position="1"/>
        <end position="46"/>
    </location>
</feature>
<feature type="compositionally biased region" description="Basic residues" evidence="2">
    <location>
        <begin position="1"/>
        <end position="10"/>
    </location>
</feature>
<feature type="compositionally biased region" description="Basic and acidic residues" evidence="2">
    <location>
        <begin position="21"/>
        <end position="36"/>
    </location>
</feature>
<feature type="modified residue" description="Phosphoserine" evidence="5">
    <location>
        <position position="261"/>
    </location>
</feature>
<feature type="modified residue" description="N6-acetyllysine" evidence="4">
    <location>
        <position position="276"/>
    </location>
</feature>
<feature type="cross-link" description="Glycyl lysine isopeptide (Lys-Gly) (interchain with G-Cter in SUMO2)" evidence="7">
    <location>
        <position position="160"/>
    </location>
</feature>
<feature type="cross-link" description="Glycyl lysine isopeptide (Lys-Gly) (interchain with G-Cter in SUMO2)" evidence="7">
    <location>
        <position position="314"/>
    </location>
</feature>
<feature type="cross-link" description="Glycyl lysine isopeptide (Lys-Gly) (interchain with G-Cter in SUMO2)" evidence="6 7">
    <location>
        <position position="322"/>
    </location>
</feature>
<feature type="sequence conflict" description="In Ref. 1; AAL83818." evidence="3" ref="1">
    <original>GFAVQAKKPKRNEIDAE</original>
    <variation>RLCSSGEEAKKKRNRCG</variation>
    <location>
        <begin position="11"/>
        <end position="27"/>
    </location>
</feature>
<feature type="sequence conflict" description="In Ref. 1; AAL83818." evidence="3" ref="1">
    <original>A</original>
    <variation>V</variation>
    <location>
        <position position="34"/>
    </location>
</feature>
<feature type="sequence conflict" description="In Ref. 1; AAL83818." evidence="3" ref="1">
    <original>V</original>
    <variation>VP</variation>
    <location>
        <position position="286"/>
    </location>
</feature>
<evidence type="ECO:0000255" key="1">
    <source>
        <dbReference type="PROSITE-ProRule" id="PRU00034"/>
    </source>
</evidence>
<evidence type="ECO:0000256" key="2">
    <source>
        <dbReference type="SAM" id="MobiDB-lite"/>
    </source>
</evidence>
<evidence type="ECO:0000305" key="3"/>
<evidence type="ECO:0007744" key="4">
    <source>
    </source>
</evidence>
<evidence type="ECO:0007744" key="5">
    <source>
    </source>
</evidence>
<evidence type="ECO:0007744" key="6">
    <source>
    </source>
</evidence>
<evidence type="ECO:0007744" key="7">
    <source>
    </source>
</evidence>
<name>BRX1_HUMAN</name>
<sequence length="353" mass="41401">MAATKRKRRGGFAVQAKKPKRNEIDAEPPAKRHATAEEVEEEERDRIPGPVCKGKWKNKERILIFSSRGINFRTRHLMQDLRMLMPHSKADTKMDRKDKLFVINEVCEMKNCNKCIYFEAKKKQDLYMWLSNSPHGPSAKFLVQNIHTLAELKMTGNCLKGSRPLLSFDPAFDELPHYALLKELLIQIFSTPRYHPKSQPFVDHVFTFTILDNRIWFRNFQIIEEDAALVEIGPRFVLNLIKIFQGSFGGPTLYENPHYQSPNMHRRVIRSITAAKYREKQQVKDVQKLRKKEPKTLLPHDPTADVFVTPAEEKPIEIQWVKPEPKVDLKARKKRIYKRQRKMKQRMDSGKTK</sequence>
<proteinExistence type="evidence at protein level"/>
<organism>
    <name type="scientific">Homo sapiens</name>
    <name type="common">Human</name>
    <dbReference type="NCBI Taxonomy" id="9606"/>
    <lineage>
        <taxon>Eukaryota</taxon>
        <taxon>Metazoa</taxon>
        <taxon>Chordata</taxon>
        <taxon>Craniata</taxon>
        <taxon>Vertebrata</taxon>
        <taxon>Euteleostomi</taxon>
        <taxon>Mammalia</taxon>
        <taxon>Eutheria</taxon>
        <taxon>Euarchontoglires</taxon>
        <taxon>Primates</taxon>
        <taxon>Haplorrhini</taxon>
        <taxon>Catarrhini</taxon>
        <taxon>Hominidae</taxon>
        <taxon>Homo</taxon>
    </lineage>
</organism>
<gene>
    <name type="primary">BRIX1</name>
    <name type="synonym">BRIX</name>
    <name type="synonym">BXDC2</name>
</gene>
<reference key="1">
    <citation type="journal article" date="2001" name="Biol. Chem.">
        <title>Brix from Xenopus laevis and brx1p from yeast define a new family of proteins involved in the biogenesis of large ribosomal subunits.</title>
        <authorList>
            <person name="Kaser A."/>
            <person name="Bogengruber E."/>
            <person name="Hallegger M."/>
            <person name="Doppler E."/>
            <person name="Lepperdinger G."/>
            <person name="Jantsch M."/>
            <person name="Breitenbach M."/>
            <person name="Kreil G."/>
        </authorList>
    </citation>
    <scope>NUCLEOTIDE SEQUENCE [MRNA]</scope>
</reference>
<reference key="2">
    <citation type="journal article" date="2006" name="BMC Genomics">
        <title>NovelFam3000 -- uncharacterized human protein domains conserved across model organisms.</title>
        <authorList>
            <person name="Kemmer D."/>
            <person name="Podowski R.M."/>
            <person name="Arenillas D."/>
            <person name="Lim J."/>
            <person name="Hodges E."/>
            <person name="Roth P."/>
            <person name="Sonnhammer E.L.L."/>
            <person name="Hoeoeg C."/>
            <person name="Wasserman W.W."/>
        </authorList>
    </citation>
    <scope>NUCLEOTIDE SEQUENCE [MRNA]</scope>
</reference>
<reference key="3">
    <citation type="journal article" date="2004" name="Nat. Genet.">
        <title>Complete sequencing and characterization of 21,243 full-length human cDNAs.</title>
        <authorList>
            <person name="Ota T."/>
            <person name="Suzuki Y."/>
            <person name="Nishikawa T."/>
            <person name="Otsuki T."/>
            <person name="Sugiyama T."/>
            <person name="Irie R."/>
            <person name="Wakamatsu A."/>
            <person name="Hayashi K."/>
            <person name="Sato H."/>
            <person name="Nagai K."/>
            <person name="Kimura K."/>
            <person name="Makita H."/>
            <person name="Sekine M."/>
            <person name="Obayashi M."/>
            <person name="Nishi T."/>
            <person name="Shibahara T."/>
            <person name="Tanaka T."/>
            <person name="Ishii S."/>
            <person name="Yamamoto J."/>
            <person name="Saito K."/>
            <person name="Kawai Y."/>
            <person name="Isono Y."/>
            <person name="Nakamura Y."/>
            <person name="Nagahari K."/>
            <person name="Murakami K."/>
            <person name="Yasuda T."/>
            <person name="Iwayanagi T."/>
            <person name="Wagatsuma M."/>
            <person name="Shiratori A."/>
            <person name="Sudo H."/>
            <person name="Hosoiri T."/>
            <person name="Kaku Y."/>
            <person name="Kodaira H."/>
            <person name="Kondo H."/>
            <person name="Sugawara M."/>
            <person name="Takahashi M."/>
            <person name="Kanda K."/>
            <person name="Yokoi T."/>
            <person name="Furuya T."/>
            <person name="Kikkawa E."/>
            <person name="Omura Y."/>
            <person name="Abe K."/>
            <person name="Kamihara K."/>
            <person name="Katsuta N."/>
            <person name="Sato K."/>
            <person name="Tanikawa M."/>
            <person name="Yamazaki M."/>
            <person name="Ninomiya K."/>
            <person name="Ishibashi T."/>
            <person name="Yamashita H."/>
            <person name="Murakawa K."/>
            <person name="Fujimori K."/>
            <person name="Tanai H."/>
            <person name="Kimata M."/>
            <person name="Watanabe M."/>
            <person name="Hiraoka S."/>
            <person name="Chiba Y."/>
            <person name="Ishida S."/>
            <person name="Ono Y."/>
            <person name="Takiguchi S."/>
            <person name="Watanabe S."/>
            <person name="Yosida M."/>
            <person name="Hotuta T."/>
            <person name="Kusano J."/>
            <person name="Kanehori K."/>
            <person name="Takahashi-Fujii A."/>
            <person name="Hara H."/>
            <person name="Tanase T.-O."/>
            <person name="Nomura Y."/>
            <person name="Togiya S."/>
            <person name="Komai F."/>
            <person name="Hara R."/>
            <person name="Takeuchi K."/>
            <person name="Arita M."/>
            <person name="Imose N."/>
            <person name="Musashino K."/>
            <person name="Yuuki H."/>
            <person name="Oshima A."/>
            <person name="Sasaki N."/>
            <person name="Aotsuka S."/>
            <person name="Yoshikawa Y."/>
            <person name="Matsunawa H."/>
            <person name="Ichihara T."/>
            <person name="Shiohata N."/>
            <person name="Sano S."/>
            <person name="Moriya S."/>
            <person name="Momiyama H."/>
            <person name="Satoh N."/>
            <person name="Takami S."/>
            <person name="Terashima Y."/>
            <person name="Suzuki O."/>
            <person name="Nakagawa S."/>
            <person name="Senoh A."/>
            <person name="Mizoguchi H."/>
            <person name="Goto Y."/>
            <person name="Shimizu F."/>
            <person name="Wakebe H."/>
            <person name="Hishigaki H."/>
            <person name="Watanabe T."/>
            <person name="Sugiyama A."/>
            <person name="Takemoto M."/>
            <person name="Kawakami B."/>
            <person name="Yamazaki M."/>
            <person name="Watanabe K."/>
            <person name="Kumagai A."/>
            <person name="Itakura S."/>
            <person name="Fukuzumi Y."/>
            <person name="Fujimori Y."/>
            <person name="Komiyama M."/>
            <person name="Tashiro H."/>
            <person name="Tanigami A."/>
            <person name="Fujiwara T."/>
            <person name="Ono T."/>
            <person name="Yamada K."/>
            <person name="Fujii Y."/>
            <person name="Ozaki K."/>
            <person name="Hirao M."/>
            <person name="Ohmori Y."/>
            <person name="Kawabata A."/>
            <person name="Hikiji T."/>
            <person name="Kobatake N."/>
            <person name="Inagaki H."/>
            <person name="Ikema Y."/>
            <person name="Okamoto S."/>
            <person name="Okitani R."/>
            <person name="Kawakami T."/>
            <person name="Noguchi S."/>
            <person name="Itoh T."/>
            <person name="Shigeta K."/>
            <person name="Senba T."/>
            <person name="Matsumura K."/>
            <person name="Nakajima Y."/>
            <person name="Mizuno T."/>
            <person name="Morinaga M."/>
            <person name="Sasaki M."/>
            <person name="Togashi T."/>
            <person name="Oyama M."/>
            <person name="Hata H."/>
            <person name="Watanabe M."/>
            <person name="Komatsu T."/>
            <person name="Mizushima-Sugano J."/>
            <person name="Satoh T."/>
            <person name="Shirai Y."/>
            <person name="Takahashi Y."/>
            <person name="Nakagawa K."/>
            <person name="Okumura K."/>
            <person name="Nagase T."/>
            <person name="Nomura N."/>
            <person name="Kikuchi H."/>
            <person name="Masuho Y."/>
            <person name="Yamashita R."/>
            <person name="Nakai K."/>
            <person name="Yada T."/>
            <person name="Nakamura Y."/>
            <person name="Ohara O."/>
            <person name="Isogai T."/>
            <person name="Sugano S."/>
        </authorList>
    </citation>
    <scope>NUCLEOTIDE SEQUENCE [LARGE SCALE MRNA]</scope>
    <source>
        <tissue>Brain cortex</tissue>
    </source>
</reference>
<reference key="4">
    <citation type="submission" date="2005-07" db="EMBL/GenBank/DDBJ databases">
        <authorList>
            <person name="Mural R.J."/>
            <person name="Istrail S."/>
            <person name="Sutton G.G."/>
            <person name="Florea L."/>
            <person name="Halpern A.L."/>
            <person name="Mobarry C.M."/>
            <person name="Lippert R."/>
            <person name="Walenz B."/>
            <person name="Shatkay H."/>
            <person name="Dew I."/>
            <person name="Miller J.R."/>
            <person name="Flanigan M.J."/>
            <person name="Edwards N.J."/>
            <person name="Bolanos R."/>
            <person name="Fasulo D."/>
            <person name="Halldorsson B.V."/>
            <person name="Hannenhalli S."/>
            <person name="Turner R."/>
            <person name="Yooseph S."/>
            <person name="Lu F."/>
            <person name="Nusskern D.R."/>
            <person name="Shue B.C."/>
            <person name="Zheng X.H."/>
            <person name="Zhong F."/>
            <person name="Delcher A.L."/>
            <person name="Huson D.H."/>
            <person name="Kravitz S.A."/>
            <person name="Mouchard L."/>
            <person name="Reinert K."/>
            <person name="Remington K.A."/>
            <person name="Clark A.G."/>
            <person name="Waterman M.S."/>
            <person name="Eichler E.E."/>
            <person name="Adams M.D."/>
            <person name="Hunkapiller M.W."/>
            <person name="Myers E.W."/>
            <person name="Venter J.C."/>
        </authorList>
    </citation>
    <scope>NUCLEOTIDE SEQUENCE [LARGE SCALE GENOMIC DNA]</scope>
</reference>
<reference key="5">
    <citation type="journal article" date="2004" name="Genome Res.">
        <title>The status, quality, and expansion of the NIH full-length cDNA project: the Mammalian Gene Collection (MGC).</title>
        <authorList>
            <consortium name="The MGC Project Team"/>
        </authorList>
    </citation>
    <scope>NUCLEOTIDE SEQUENCE [LARGE SCALE MRNA]</scope>
    <source>
        <tissue>Cervix</tissue>
    </source>
</reference>
<reference key="6">
    <citation type="journal article" date="2006" name="Cell">
        <title>Global, in vivo, and site-specific phosphorylation dynamics in signaling networks.</title>
        <authorList>
            <person name="Olsen J.V."/>
            <person name="Blagoev B."/>
            <person name="Gnad F."/>
            <person name="Macek B."/>
            <person name="Kumar C."/>
            <person name="Mortensen P."/>
            <person name="Mann M."/>
        </authorList>
    </citation>
    <scope>IDENTIFICATION BY MASS SPECTROMETRY [LARGE SCALE ANALYSIS]</scope>
    <source>
        <tissue>Cervix carcinoma</tissue>
    </source>
</reference>
<reference key="7">
    <citation type="journal article" date="2008" name="Proc. Natl. Acad. Sci. U.S.A.">
        <title>A quantitative atlas of mitotic phosphorylation.</title>
        <authorList>
            <person name="Dephoure N."/>
            <person name="Zhou C."/>
            <person name="Villen J."/>
            <person name="Beausoleil S.A."/>
            <person name="Bakalarski C.E."/>
            <person name="Elledge S.J."/>
            <person name="Gygi S.P."/>
        </authorList>
    </citation>
    <scope>IDENTIFICATION BY MASS SPECTROMETRY [LARGE SCALE ANALYSIS]</scope>
    <source>
        <tissue>Cervix carcinoma</tissue>
    </source>
</reference>
<reference key="8">
    <citation type="journal article" date="2009" name="Science">
        <title>Lysine acetylation targets protein complexes and co-regulates major cellular functions.</title>
        <authorList>
            <person name="Choudhary C."/>
            <person name="Kumar C."/>
            <person name="Gnad F."/>
            <person name="Nielsen M.L."/>
            <person name="Rehman M."/>
            <person name="Walther T.C."/>
            <person name="Olsen J.V."/>
            <person name="Mann M."/>
        </authorList>
    </citation>
    <scope>ACETYLATION [LARGE SCALE ANALYSIS] AT LYS-276</scope>
    <scope>IDENTIFICATION BY MASS SPECTROMETRY [LARGE SCALE ANALYSIS]</scope>
</reference>
<reference key="9">
    <citation type="journal article" date="2010" name="Sci. Signal.">
        <title>Quantitative phosphoproteomics reveals widespread full phosphorylation site occupancy during mitosis.</title>
        <authorList>
            <person name="Olsen J.V."/>
            <person name="Vermeulen M."/>
            <person name="Santamaria A."/>
            <person name="Kumar C."/>
            <person name="Miller M.L."/>
            <person name="Jensen L.J."/>
            <person name="Gnad F."/>
            <person name="Cox J."/>
            <person name="Jensen T.S."/>
            <person name="Nigg E.A."/>
            <person name="Brunak S."/>
            <person name="Mann M."/>
        </authorList>
    </citation>
    <scope>IDENTIFICATION BY MASS SPECTROMETRY [LARGE SCALE ANALYSIS]</scope>
    <source>
        <tissue>Cervix carcinoma</tissue>
    </source>
</reference>
<reference key="10">
    <citation type="journal article" date="2011" name="BMC Syst. Biol.">
        <title>Initial characterization of the human central proteome.</title>
        <authorList>
            <person name="Burkard T.R."/>
            <person name="Planyavsky M."/>
            <person name="Kaupe I."/>
            <person name="Breitwieser F.P."/>
            <person name="Buerckstuemmer T."/>
            <person name="Bennett K.L."/>
            <person name="Superti-Furga G."/>
            <person name="Colinge J."/>
        </authorList>
    </citation>
    <scope>IDENTIFICATION BY MASS SPECTROMETRY [LARGE SCALE ANALYSIS]</scope>
</reference>
<reference key="11">
    <citation type="journal article" date="2013" name="J. Proteome Res.">
        <title>Toward a comprehensive characterization of a human cancer cell phosphoproteome.</title>
        <authorList>
            <person name="Zhou H."/>
            <person name="Di Palma S."/>
            <person name="Preisinger C."/>
            <person name="Peng M."/>
            <person name="Polat A.N."/>
            <person name="Heck A.J."/>
            <person name="Mohammed S."/>
        </authorList>
    </citation>
    <scope>PHOSPHORYLATION [LARGE SCALE ANALYSIS] AT SER-261</scope>
    <scope>IDENTIFICATION BY MASS SPECTROMETRY [LARGE SCALE ANALYSIS]</scope>
    <source>
        <tissue>Cervix carcinoma</tissue>
        <tissue>Erythroleukemia</tissue>
    </source>
</reference>
<reference key="12">
    <citation type="journal article" date="2014" name="Nat. Struct. Mol. Biol.">
        <title>Uncovering global SUMOylation signaling networks in a site-specific manner.</title>
        <authorList>
            <person name="Hendriks I.A."/>
            <person name="D'Souza R.C."/>
            <person name="Yang B."/>
            <person name="Verlaan-de Vries M."/>
            <person name="Mann M."/>
            <person name="Vertegaal A.C."/>
        </authorList>
    </citation>
    <scope>SUMOYLATION [LARGE SCALE ANALYSIS] AT LYS-322</scope>
    <scope>IDENTIFICATION BY MASS SPECTROMETRY [LARGE SCALE ANALYSIS]</scope>
</reference>
<reference key="13">
    <citation type="journal article" date="2017" name="Nat. Struct. Mol. Biol.">
        <title>Site-specific mapping of the human SUMO proteome reveals co-modification with phosphorylation.</title>
        <authorList>
            <person name="Hendriks I.A."/>
            <person name="Lyon D."/>
            <person name="Young C."/>
            <person name="Jensen L.J."/>
            <person name="Vertegaal A.C."/>
            <person name="Nielsen M.L."/>
        </authorList>
    </citation>
    <scope>SUMOYLATION [LARGE SCALE ANALYSIS] AT LYS-160; LYS-314 AND LYS-322</scope>
    <scope>IDENTIFICATION BY MASS SPECTROMETRY [LARGE SCALE ANALYSIS]</scope>
</reference>
<accession>Q8TDN6</accession>
<accession>A8K0P5</accession>
<accession>Q3ZTT4</accession>
<accession>Q8N453</accession>
<accession>Q96DH1</accession>
<protein>
    <recommendedName>
        <fullName>Ribosome biogenesis protein BRX1 homolog</fullName>
    </recommendedName>
    <alternativeName>
        <fullName>Brix domain-containing protein 2</fullName>
    </alternativeName>
</protein>
<keyword id="KW-0002">3D-structure</keyword>
<keyword id="KW-0007">Acetylation</keyword>
<keyword id="KW-1017">Isopeptide bond</keyword>
<keyword id="KW-0539">Nucleus</keyword>
<keyword id="KW-0597">Phosphoprotein</keyword>
<keyword id="KW-1267">Proteomics identification</keyword>
<keyword id="KW-1185">Reference proteome</keyword>
<keyword id="KW-0690">Ribosome biogenesis</keyword>
<keyword id="KW-0832">Ubl conjugation</keyword>
<comment type="function">
    <text>Required for biogenesis of the 60S ribosomal subunit.</text>
</comment>
<comment type="interaction">
    <interactant intactId="EBI-1052326">
        <id>Q8TDN6</id>
    </interactant>
    <interactant intactId="EBI-1048111">
        <id>Q99848</id>
        <label>EBNA1BP2</label>
    </interactant>
    <organismsDiffer>false</organismsDiffer>
    <experiments>6</experiments>
</comment>
<comment type="interaction">
    <interactant intactId="EBI-1052326">
        <id>Q8TDN6</id>
    </interactant>
    <interactant intactId="EBI-351126">
        <id>Q00839</id>
        <label>HNRNPU</label>
    </interactant>
    <organismsDiffer>false</organismsDiffer>
    <experiments>2</experiments>
</comment>
<comment type="interaction">
    <interactant intactId="EBI-1052326">
        <id>Q8TDN6</id>
    </interactant>
    <interactant intactId="EBI-356849">
        <id>P26373</id>
        <label>RPL13</label>
    </interactant>
    <organismsDiffer>false</organismsDiffer>
    <experiments>3</experiments>
</comment>
<comment type="subcellular location">
    <subcellularLocation>
        <location>Nucleus</location>
        <location>Nucleolus</location>
    </subcellularLocation>
</comment>
<comment type="similarity">
    <text evidence="3">Belongs to the BRX1 family.</text>
</comment>
<dbReference type="EMBL" id="AF347667">
    <property type="protein sequence ID" value="AAL83818.1"/>
    <property type="molecule type" value="mRNA"/>
</dbReference>
<dbReference type="EMBL" id="AY364244">
    <property type="protein sequence ID" value="AAQ76803.1"/>
    <property type="molecule type" value="mRNA"/>
</dbReference>
<dbReference type="EMBL" id="AK289610">
    <property type="protein sequence ID" value="BAF82299.1"/>
    <property type="molecule type" value="mRNA"/>
</dbReference>
<dbReference type="EMBL" id="CH471119">
    <property type="protein sequence ID" value="EAW55909.1"/>
    <property type="molecule type" value="Genomic_DNA"/>
</dbReference>
<dbReference type="EMBL" id="BC001546">
    <property type="protein sequence ID" value="AAH01546.2"/>
    <property type="molecule type" value="mRNA"/>
</dbReference>
<dbReference type="EMBL" id="BC036741">
    <property type="protein sequence ID" value="AAH36741.1"/>
    <property type="molecule type" value="mRNA"/>
</dbReference>
<dbReference type="CCDS" id="CCDS34143.1"/>
<dbReference type="RefSeq" id="NP_060791.3">
    <property type="nucleotide sequence ID" value="NM_018321.3"/>
</dbReference>
<dbReference type="PDB" id="8FKP">
    <property type="method" value="EM"/>
    <property type="resolution" value="2.85 A"/>
    <property type="chains" value="SO=1-353"/>
</dbReference>
<dbReference type="PDB" id="8FKQ">
    <property type="method" value="EM"/>
    <property type="resolution" value="2.76 A"/>
    <property type="chains" value="SO=1-353"/>
</dbReference>
<dbReference type="PDB" id="8FKR">
    <property type="method" value="EM"/>
    <property type="resolution" value="2.89 A"/>
    <property type="chains" value="SO=1-353"/>
</dbReference>
<dbReference type="PDB" id="8FKS">
    <property type="method" value="EM"/>
    <property type="resolution" value="2.88 A"/>
    <property type="chains" value="SO=1-353"/>
</dbReference>
<dbReference type="PDB" id="8FKT">
    <property type="method" value="EM"/>
    <property type="resolution" value="2.81 A"/>
    <property type="chains" value="SO=1-353"/>
</dbReference>
<dbReference type="PDB" id="8FKU">
    <property type="method" value="EM"/>
    <property type="resolution" value="2.82 A"/>
    <property type="chains" value="SO=1-353"/>
</dbReference>
<dbReference type="PDB" id="8FKV">
    <property type="method" value="EM"/>
    <property type="resolution" value="2.47 A"/>
    <property type="chains" value="SO=1-353"/>
</dbReference>
<dbReference type="PDB" id="8FKW">
    <property type="method" value="EM"/>
    <property type="resolution" value="2.50 A"/>
    <property type="chains" value="SO=1-353"/>
</dbReference>
<dbReference type="PDB" id="8FKX">
    <property type="method" value="EM"/>
    <property type="resolution" value="2.59 A"/>
    <property type="chains" value="SO=1-353"/>
</dbReference>
<dbReference type="PDB" id="8FKY">
    <property type="method" value="EM"/>
    <property type="resolution" value="2.67 A"/>
    <property type="chains" value="SO=1-353"/>
</dbReference>
<dbReference type="PDBsum" id="8FKP"/>
<dbReference type="PDBsum" id="8FKQ"/>
<dbReference type="PDBsum" id="8FKR"/>
<dbReference type="PDBsum" id="8FKS"/>
<dbReference type="PDBsum" id="8FKT"/>
<dbReference type="PDBsum" id="8FKU"/>
<dbReference type="PDBsum" id="8FKV"/>
<dbReference type="PDBsum" id="8FKW"/>
<dbReference type="PDBsum" id="8FKX"/>
<dbReference type="PDBsum" id="8FKY"/>
<dbReference type="EMDB" id="EMD-29252"/>
<dbReference type="EMDB" id="EMD-29253"/>
<dbReference type="EMDB" id="EMD-29254"/>
<dbReference type="EMDB" id="EMD-29255"/>
<dbReference type="EMDB" id="EMD-29256"/>
<dbReference type="EMDB" id="EMD-29257"/>
<dbReference type="EMDB" id="EMD-29258"/>
<dbReference type="EMDB" id="EMD-29259"/>
<dbReference type="EMDB" id="EMD-29260"/>
<dbReference type="EMDB" id="EMD-29261"/>
<dbReference type="SMR" id="Q8TDN6"/>
<dbReference type="BioGRID" id="120586">
    <property type="interactions" value="315"/>
</dbReference>
<dbReference type="CORUM" id="Q8TDN6"/>
<dbReference type="FunCoup" id="Q8TDN6">
    <property type="interactions" value="2631"/>
</dbReference>
<dbReference type="IntAct" id="Q8TDN6">
    <property type="interactions" value="165"/>
</dbReference>
<dbReference type="MINT" id="Q8TDN6"/>
<dbReference type="STRING" id="9606.ENSP00000338862"/>
<dbReference type="GlyGen" id="Q8TDN6">
    <property type="glycosylation" value="3 sites, 1 O-linked glycan (3 sites)"/>
</dbReference>
<dbReference type="iPTMnet" id="Q8TDN6"/>
<dbReference type="MetOSite" id="Q8TDN6"/>
<dbReference type="PhosphoSitePlus" id="Q8TDN6"/>
<dbReference type="SwissPalm" id="Q8TDN6"/>
<dbReference type="BioMuta" id="BRIX1"/>
<dbReference type="DMDM" id="30580352"/>
<dbReference type="jPOST" id="Q8TDN6"/>
<dbReference type="MassIVE" id="Q8TDN6"/>
<dbReference type="PaxDb" id="9606-ENSP00000338862"/>
<dbReference type="PeptideAtlas" id="Q8TDN6"/>
<dbReference type="ProteomicsDB" id="74313"/>
<dbReference type="Pumba" id="Q8TDN6"/>
<dbReference type="Antibodypedia" id="10048">
    <property type="antibodies" value="202 antibodies from 25 providers"/>
</dbReference>
<dbReference type="DNASU" id="55299"/>
<dbReference type="Ensembl" id="ENST00000336767.6">
    <property type="protein sequence ID" value="ENSP00000338862.5"/>
    <property type="gene ID" value="ENSG00000113460.13"/>
</dbReference>
<dbReference type="GeneID" id="55299"/>
<dbReference type="KEGG" id="hsa:55299"/>
<dbReference type="MANE-Select" id="ENST00000336767.6">
    <property type="protein sequence ID" value="ENSP00000338862.5"/>
    <property type="RefSeq nucleotide sequence ID" value="NM_018321.4"/>
    <property type="RefSeq protein sequence ID" value="NP_060791.3"/>
</dbReference>
<dbReference type="UCSC" id="uc003jja.4">
    <property type="organism name" value="human"/>
</dbReference>
<dbReference type="AGR" id="HGNC:24170"/>
<dbReference type="CTD" id="55299"/>
<dbReference type="DisGeNET" id="55299"/>
<dbReference type="GeneCards" id="BRIX1"/>
<dbReference type="HGNC" id="HGNC:24170">
    <property type="gene designation" value="BRIX1"/>
</dbReference>
<dbReference type="HPA" id="ENSG00000113460">
    <property type="expression patterns" value="Low tissue specificity"/>
</dbReference>
<dbReference type="MIM" id="618466">
    <property type="type" value="gene"/>
</dbReference>
<dbReference type="neXtProt" id="NX_Q8TDN6"/>
<dbReference type="OpenTargets" id="ENSG00000113460"/>
<dbReference type="PharmGKB" id="PA165660166"/>
<dbReference type="VEuPathDB" id="HostDB:ENSG00000113460"/>
<dbReference type="eggNOG" id="KOG2971">
    <property type="taxonomic scope" value="Eukaryota"/>
</dbReference>
<dbReference type="GeneTree" id="ENSGT00390000014467"/>
<dbReference type="HOGENOM" id="CLU_048373_2_0_1"/>
<dbReference type="InParanoid" id="Q8TDN6"/>
<dbReference type="OMA" id="YRHRHLM"/>
<dbReference type="OrthoDB" id="1638493at2759"/>
<dbReference type="PAN-GO" id="Q8TDN6">
    <property type="GO annotations" value="3 GO annotations based on evolutionary models"/>
</dbReference>
<dbReference type="PhylomeDB" id="Q8TDN6"/>
<dbReference type="TreeFam" id="TF105766"/>
<dbReference type="PathwayCommons" id="Q8TDN6"/>
<dbReference type="SignaLink" id="Q8TDN6"/>
<dbReference type="BioGRID-ORCS" id="55299">
    <property type="hits" value="745 hits in 1158 CRISPR screens"/>
</dbReference>
<dbReference type="CD-CODE" id="232F8A39">
    <property type="entry name" value="P-body"/>
</dbReference>
<dbReference type="CD-CODE" id="91857CE7">
    <property type="entry name" value="Nucleolus"/>
</dbReference>
<dbReference type="ChiTaRS" id="BRIX1">
    <property type="organism name" value="human"/>
</dbReference>
<dbReference type="GeneWiki" id="BXDC2"/>
<dbReference type="GenomeRNAi" id="55299"/>
<dbReference type="Pharos" id="Q8TDN6">
    <property type="development level" value="Tbio"/>
</dbReference>
<dbReference type="PRO" id="PR:Q8TDN6"/>
<dbReference type="Proteomes" id="UP000005640">
    <property type="component" value="Chromosome 5"/>
</dbReference>
<dbReference type="RNAct" id="Q8TDN6">
    <property type="molecule type" value="protein"/>
</dbReference>
<dbReference type="Bgee" id="ENSG00000113460">
    <property type="expression patterns" value="Expressed in calcaneal tendon and 119 other cell types or tissues"/>
</dbReference>
<dbReference type="GO" id="GO:0005694">
    <property type="term" value="C:chromosome"/>
    <property type="evidence" value="ECO:0000314"/>
    <property type="project" value="HPA"/>
</dbReference>
<dbReference type="GO" id="GO:0005730">
    <property type="term" value="C:nucleolus"/>
    <property type="evidence" value="ECO:0000314"/>
    <property type="project" value="HPA"/>
</dbReference>
<dbReference type="GO" id="GO:0003723">
    <property type="term" value="F:RNA binding"/>
    <property type="evidence" value="ECO:0007005"/>
    <property type="project" value="UniProtKB"/>
</dbReference>
<dbReference type="GO" id="GO:0019843">
    <property type="term" value="F:rRNA binding"/>
    <property type="evidence" value="ECO:0007669"/>
    <property type="project" value="InterPro"/>
</dbReference>
<dbReference type="GO" id="GO:0000027">
    <property type="term" value="P:ribosomal large subunit assembly"/>
    <property type="evidence" value="ECO:0000318"/>
    <property type="project" value="GO_Central"/>
</dbReference>
<dbReference type="GO" id="GO:0006364">
    <property type="term" value="P:rRNA processing"/>
    <property type="evidence" value="ECO:0007669"/>
    <property type="project" value="InterPro"/>
</dbReference>
<dbReference type="FunFam" id="3.40.50.10480:FF:000003">
    <property type="entry name" value="Ribosome biogenesis protein BRX1"/>
    <property type="match status" value="1"/>
</dbReference>
<dbReference type="Gene3D" id="3.40.50.10480">
    <property type="entry name" value="Probable brix-domain ribosomal biogenesis protein"/>
    <property type="match status" value="1"/>
</dbReference>
<dbReference type="InterPro" id="IPR007109">
    <property type="entry name" value="Brix"/>
</dbReference>
<dbReference type="InterPro" id="IPR026532">
    <property type="entry name" value="BRX1"/>
</dbReference>
<dbReference type="PANTHER" id="PTHR13634">
    <property type="entry name" value="RIBOSOME BIOGENESIS PROTEIN BRIX"/>
    <property type="match status" value="1"/>
</dbReference>
<dbReference type="PANTHER" id="PTHR13634:SF0">
    <property type="entry name" value="RIBOSOME BIOGENESIS PROTEIN BRX1 HOMOLOG"/>
    <property type="match status" value="1"/>
</dbReference>
<dbReference type="Pfam" id="PF04427">
    <property type="entry name" value="Brix"/>
    <property type="match status" value="1"/>
</dbReference>
<dbReference type="SMART" id="SM00879">
    <property type="entry name" value="Brix"/>
    <property type="match status" value="1"/>
</dbReference>
<dbReference type="SUPFAM" id="SSF52954">
    <property type="entry name" value="Class II aaRS ABD-related"/>
    <property type="match status" value="1"/>
</dbReference>
<dbReference type="PROSITE" id="PS50833">
    <property type="entry name" value="BRIX"/>
    <property type="match status" value="1"/>
</dbReference>